<proteinExistence type="inferred from homology"/>
<dbReference type="EMBL" id="CH954182">
    <property type="protein sequence ID" value="EDV54167.1"/>
    <property type="molecule type" value="Genomic_DNA"/>
</dbReference>
<dbReference type="EnsemblMetazoa" id="FBtr0132578">
    <property type="protein sequence ID" value="FBpp0131070"/>
    <property type="gene ID" value="FBgn0104812"/>
</dbReference>
<dbReference type="EnsemblMetazoa" id="XM_001982261.3">
    <property type="protein sequence ID" value="XP_001982297.1"/>
    <property type="gene ID" value="LOC6555201"/>
</dbReference>
<dbReference type="GeneID" id="6555201"/>
<dbReference type="KEGG" id="der:6555201"/>
<dbReference type="eggNOG" id="KOG3970">
    <property type="taxonomic scope" value="Eukaryota"/>
</dbReference>
<dbReference type="HOGENOM" id="CLU_075387_0_0_1"/>
<dbReference type="OMA" id="HDHDYNP"/>
<dbReference type="OrthoDB" id="1916590at2759"/>
<dbReference type="PhylomeDB" id="B3P7K6"/>
<dbReference type="Proteomes" id="UP000008711">
    <property type="component" value="Unassembled WGS sequence"/>
</dbReference>
<dbReference type="GO" id="GO:0005794">
    <property type="term" value="C:Golgi apparatus"/>
    <property type="evidence" value="ECO:0007669"/>
    <property type="project" value="TreeGrafter"/>
</dbReference>
<dbReference type="GO" id="GO:0016020">
    <property type="term" value="C:membrane"/>
    <property type="evidence" value="ECO:0007669"/>
    <property type="project" value="UniProtKB-SubCell"/>
</dbReference>
<dbReference type="GO" id="GO:0008270">
    <property type="term" value="F:zinc ion binding"/>
    <property type="evidence" value="ECO:0007669"/>
    <property type="project" value="UniProtKB-KW"/>
</dbReference>
<dbReference type="CDD" id="cd16487">
    <property type="entry name" value="mRING-H2-C3DHC3_ZFPL1"/>
    <property type="match status" value="1"/>
</dbReference>
<dbReference type="Gene3D" id="3.30.40.10">
    <property type="entry name" value="Zinc/RING finger domain, C3HC4 (zinc finger)"/>
    <property type="match status" value="1"/>
</dbReference>
<dbReference type="InterPro" id="IPR039043">
    <property type="entry name" value="ZFPL1"/>
</dbReference>
<dbReference type="InterPro" id="IPR001841">
    <property type="entry name" value="Znf_RING"/>
</dbReference>
<dbReference type="InterPro" id="IPR013083">
    <property type="entry name" value="Znf_RING/FYVE/PHD"/>
</dbReference>
<dbReference type="PANTHER" id="PTHR12981">
    <property type="entry name" value="ZINC FINGER PROTEIN-LIKE 1"/>
    <property type="match status" value="1"/>
</dbReference>
<dbReference type="PANTHER" id="PTHR12981:SF0">
    <property type="entry name" value="ZINC FINGER PROTEIN-LIKE 1"/>
    <property type="match status" value="1"/>
</dbReference>
<dbReference type="SMART" id="SM00184">
    <property type="entry name" value="RING"/>
    <property type="match status" value="1"/>
</dbReference>
<dbReference type="SUPFAM" id="SSF57850">
    <property type="entry name" value="RING/U-box"/>
    <property type="match status" value="1"/>
</dbReference>
<dbReference type="PROSITE" id="PS50089">
    <property type="entry name" value="ZF_RING_2"/>
    <property type="match status" value="1"/>
</dbReference>
<evidence type="ECO:0000250" key="1"/>
<evidence type="ECO:0000255" key="2"/>
<evidence type="ECO:0000255" key="3">
    <source>
        <dbReference type="PROSITE-ProRule" id="PRU00175"/>
    </source>
</evidence>
<evidence type="ECO:0000256" key="4">
    <source>
        <dbReference type="SAM" id="MobiDB-lite"/>
    </source>
</evidence>
<evidence type="ECO:0000305" key="5"/>
<reference key="1">
    <citation type="journal article" date="2007" name="Nature">
        <title>Evolution of genes and genomes on the Drosophila phylogeny.</title>
        <authorList>
            <consortium name="Drosophila 12 genomes consortium"/>
        </authorList>
    </citation>
    <scope>NUCLEOTIDE SEQUENCE [LARGE SCALE GENOMIC DNA]</scope>
    <source>
        <strain>Tucson 14021-0224.01</strain>
    </source>
</reference>
<feature type="chain" id="PRO_0000355178" description="Zinc finger protein-like 1 homolog">
    <location>
        <begin position="1"/>
        <end position="298"/>
    </location>
</feature>
<feature type="transmembrane region" description="Helical" evidence="2">
    <location>
        <begin position="255"/>
        <end position="275"/>
    </location>
</feature>
<feature type="zinc finger region" description="B box-type; degenerate">
    <location>
        <begin position="1"/>
        <end position="43"/>
    </location>
</feature>
<feature type="zinc finger region" description="RING-type; atypical" evidence="3">
    <location>
        <begin position="53"/>
        <end position="101"/>
    </location>
</feature>
<feature type="region of interest" description="Disordered" evidence="4">
    <location>
        <begin position="199"/>
        <end position="230"/>
    </location>
</feature>
<feature type="modified residue" description="Phosphoserine" evidence="1">
    <location>
        <position position="214"/>
    </location>
</feature>
<gene>
    <name type="ORF">GG12524</name>
</gene>
<protein>
    <recommendedName>
        <fullName>Zinc finger protein-like 1 homolog</fullName>
    </recommendedName>
</protein>
<sequence>MGLCKCPKRLVTNQFCFEHRVNVCEHCMVQSHPKCIVQSYLQWLRDSDYISNCTLCGTTLEQGDCVRLVCYHVFHWDCLNARQAALPANTAPRGHQCPACTVEIFPNANLVSPVADALKSFLSQVNWGRNGLGLALLSEEQNSLKAIKPKVASQSAVSNMTKVHHIHSGGERERTKPNGHDAVSPHSVLLMDAFNPPSAGDYASSRRPLLPRQSPIGGTDRDDNKYQRRTPAELFSRWTRRFYAPSSRPPWRRTWFLVTAGILAFVLFVYLMAWLGRGGSDAVDEGWNNPNPQPNHYE</sequence>
<comment type="subcellular location">
    <subcellularLocation>
        <location evidence="5">Membrane</location>
        <topology evidence="5">Single-pass membrane protein</topology>
    </subcellularLocation>
</comment>
<comment type="similarity">
    <text evidence="5">Belongs to the ZFPL1 family.</text>
</comment>
<accession>B3P7K6</accession>
<organism>
    <name type="scientific">Drosophila erecta</name>
    <name type="common">Fruit fly</name>
    <dbReference type="NCBI Taxonomy" id="7220"/>
    <lineage>
        <taxon>Eukaryota</taxon>
        <taxon>Metazoa</taxon>
        <taxon>Ecdysozoa</taxon>
        <taxon>Arthropoda</taxon>
        <taxon>Hexapoda</taxon>
        <taxon>Insecta</taxon>
        <taxon>Pterygota</taxon>
        <taxon>Neoptera</taxon>
        <taxon>Endopterygota</taxon>
        <taxon>Diptera</taxon>
        <taxon>Brachycera</taxon>
        <taxon>Muscomorpha</taxon>
        <taxon>Ephydroidea</taxon>
        <taxon>Drosophilidae</taxon>
        <taxon>Drosophila</taxon>
        <taxon>Sophophora</taxon>
    </lineage>
</organism>
<keyword id="KW-0472">Membrane</keyword>
<keyword id="KW-0479">Metal-binding</keyword>
<keyword id="KW-0597">Phosphoprotein</keyword>
<keyword id="KW-0812">Transmembrane</keyword>
<keyword id="KW-1133">Transmembrane helix</keyword>
<keyword id="KW-0862">Zinc</keyword>
<keyword id="KW-0863">Zinc-finger</keyword>
<name>ZFPL1_DROER</name>